<proteinExistence type="evidence at protein level"/>
<organism evidence="3">
    <name type="scientific">Brugmansia arborea</name>
    <name type="common">Angel's trumpet tree</name>
    <name type="synonym">Datura arborea</name>
    <dbReference type="NCBI Taxonomy" id="41689"/>
    <lineage>
        <taxon>Eukaryota</taxon>
        <taxon>Viridiplantae</taxon>
        <taxon>Streptophyta</taxon>
        <taxon>Embryophyta</taxon>
        <taxon>Tracheophyta</taxon>
        <taxon>Spermatophyta</taxon>
        <taxon>Magnoliopsida</taxon>
        <taxon>eudicotyledons</taxon>
        <taxon>Gunneridae</taxon>
        <taxon>Pentapetalae</taxon>
        <taxon>asterids</taxon>
        <taxon>lamiids</taxon>
        <taxon>Solanales</taxon>
        <taxon>Solanaceae</taxon>
        <taxon>Solanoideae</taxon>
        <taxon>Datureae</taxon>
        <taxon>Brugmansia</taxon>
    </lineage>
</organism>
<protein>
    <recommendedName>
        <fullName>Ferredoxin</fullName>
    </recommendedName>
</protein>
<accession>P83520</accession>
<evidence type="ECO:0000255" key="1">
    <source>
        <dbReference type="PROSITE-ProRule" id="PRU00465"/>
    </source>
</evidence>
<evidence type="ECO:0000269" key="2">
    <source>
    </source>
</evidence>
<evidence type="ECO:0000305" key="3"/>
<name>FER_BRUAR</name>
<sequence>ATYKVKLVTPDGPVEFDCPDDVYILDQAEEEGHELPYSCRAGSCSSCAGKVTAGTVDQSDGNFLDDDQMADGFVLTCVAYPQSDVTIETHKEEELTG</sequence>
<reference evidence="3" key="1">
    <citation type="journal article" date="1994" name="Phytochemistry">
        <title>Amino acid sequence of ferredoxin from Datura arborea.</title>
        <authorList>
            <person name="Mino Y."/>
        </authorList>
    </citation>
    <scope>PROTEIN SEQUENCE</scope>
    <scope>FUNCTION</scope>
    <scope>COFACTOR</scope>
    <scope>SUBCELLULAR LOCATION</scope>
    <source>
        <tissue>Leaf</tissue>
    </source>
</reference>
<keyword id="KW-0001">2Fe-2S</keyword>
<keyword id="KW-0150">Chloroplast</keyword>
<keyword id="KW-0903">Direct protein sequencing</keyword>
<keyword id="KW-0249">Electron transport</keyword>
<keyword id="KW-0408">Iron</keyword>
<keyword id="KW-0411">Iron-sulfur</keyword>
<keyword id="KW-0479">Metal-binding</keyword>
<keyword id="KW-0934">Plastid</keyword>
<keyword id="KW-0813">Transport</keyword>
<feature type="chain" id="PRO_0000189320" description="Ferredoxin">
    <location>
        <begin position="1"/>
        <end position="97"/>
    </location>
</feature>
<feature type="domain" description="2Fe-2S ferredoxin-type" evidence="1">
    <location>
        <begin position="3"/>
        <end position="93"/>
    </location>
</feature>
<feature type="binding site" evidence="1">
    <location>
        <position position="39"/>
    </location>
    <ligand>
        <name>[2Fe-2S] cluster</name>
        <dbReference type="ChEBI" id="CHEBI:190135"/>
    </ligand>
</feature>
<feature type="binding site" evidence="1">
    <location>
        <position position="44"/>
    </location>
    <ligand>
        <name>[2Fe-2S] cluster</name>
        <dbReference type="ChEBI" id="CHEBI:190135"/>
    </ligand>
</feature>
<feature type="binding site" evidence="1">
    <location>
        <position position="47"/>
    </location>
    <ligand>
        <name>[2Fe-2S] cluster</name>
        <dbReference type="ChEBI" id="CHEBI:190135"/>
    </ligand>
</feature>
<feature type="binding site" evidence="1">
    <location>
        <position position="77"/>
    </location>
    <ligand>
        <name>[2Fe-2S] cluster</name>
        <dbReference type="ChEBI" id="CHEBI:190135"/>
    </ligand>
</feature>
<comment type="function">
    <text evidence="2">Ferredoxins are iron-sulfur proteins that transfer electrons in a wide variety of metabolic reactions.</text>
</comment>
<comment type="cofactor">
    <cofactor evidence="2">
        <name>[2Fe-2S] cluster</name>
        <dbReference type="ChEBI" id="CHEBI:190135"/>
    </cofactor>
    <text evidence="2">Binds 1 [2Fe-2S] cluster.</text>
</comment>
<comment type="subcellular location">
    <subcellularLocation>
        <location evidence="2">Plastid</location>
        <location evidence="2">Chloroplast</location>
    </subcellularLocation>
</comment>
<comment type="similarity">
    <text evidence="3">Belongs to the 2Fe2S plant-type ferredoxin family.</text>
</comment>
<dbReference type="SMR" id="P83520"/>
<dbReference type="GO" id="GO:0009507">
    <property type="term" value="C:chloroplast"/>
    <property type="evidence" value="ECO:0000304"/>
    <property type="project" value="UniProtKB"/>
</dbReference>
<dbReference type="GO" id="GO:0009570">
    <property type="term" value="C:chloroplast stroma"/>
    <property type="evidence" value="ECO:0007669"/>
    <property type="project" value="TreeGrafter"/>
</dbReference>
<dbReference type="GO" id="GO:0051537">
    <property type="term" value="F:2 iron, 2 sulfur cluster binding"/>
    <property type="evidence" value="ECO:0007669"/>
    <property type="project" value="UniProtKB-KW"/>
</dbReference>
<dbReference type="GO" id="GO:0009055">
    <property type="term" value="F:electron transfer activity"/>
    <property type="evidence" value="ECO:0000304"/>
    <property type="project" value="UniProtKB"/>
</dbReference>
<dbReference type="GO" id="GO:0008198">
    <property type="term" value="F:ferrous iron binding"/>
    <property type="evidence" value="ECO:0000304"/>
    <property type="project" value="UniProtKB"/>
</dbReference>
<dbReference type="GO" id="GO:0022900">
    <property type="term" value="P:electron transport chain"/>
    <property type="evidence" value="ECO:0007669"/>
    <property type="project" value="InterPro"/>
</dbReference>
<dbReference type="GO" id="GO:0006124">
    <property type="term" value="P:ferredoxin metabolic process"/>
    <property type="evidence" value="ECO:0000304"/>
    <property type="project" value="UniProtKB"/>
</dbReference>
<dbReference type="CDD" id="cd00207">
    <property type="entry name" value="fer2"/>
    <property type="match status" value="1"/>
</dbReference>
<dbReference type="FunFam" id="3.10.20.30:FF:000014">
    <property type="entry name" value="Ferredoxin"/>
    <property type="match status" value="1"/>
</dbReference>
<dbReference type="Gene3D" id="3.10.20.30">
    <property type="match status" value="1"/>
</dbReference>
<dbReference type="InterPro" id="IPR036010">
    <property type="entry name" value="2Fe-2S_ferredoxin-like_sf"/>
</dbReference>
<dbReference type="InterPro" id="IPR001041">
    <property type="entry name" value="2Fe-2S_ferredoxin-type"/>
</dbReference>
<dbReference type="InterPro" id="IPR006058">
    <property type="entry name" value="2Fe2S_fd_BS"/>
</dbReference>
<dbReference type="InterPro" id="IPR012675">
    <property type="entry name" value="Beta-grasp_dom_sf"/>
</dbReference>
<dbReference type="InterPro" id="IPR010241">
    <property type="entry name" value="Fd_pln"/>
</dbReference>
<dbReference type="NCBIfam" id="TIGR02008">
    <property type="entry name" value="fdx_plant"/>
    <property type="match status" value="1"/>
</dbReference>
<dbReference type="PANTHER" id="PTHR43112">
    <property type="entry name" value="FERREDOXIN"/>
    <property type="match status" value="1"/>
</dbReference>
<dbReference type="PANTHER" id="PTHR43112:SF3">
    <property type="entry name" value="FERREDOXIN-2, CHLOROPLASTIC"/>
    <property type="match status" value="1"/>
</dbReference>
<dbReference type="Pfam" id="PF00111">
    <property type="entry name" value="Fer2"/>
    <property type="match status" value="1"/>
</dbReference>
<dbReference type="SUPFAM" id="SSF54292">
    <property type="entry name" value="2Fe-2S ferredoxin-like"/>
    <property type="match status" value="1"/>
</dbReference>
<dbReference type="PROSITE" id="PS00197">
    <property type="entry name" value="2FE2S_FER_1"/>
    <property type="match status" value="1"/>
</dbReference>
<dbReference type="PROSITE" id="PS51085">
    <property type="entry name" value="2FE2S_FER_2"/>
    <property type="match status" value="1"/>
</dbReference>